<proteinExistence type="evidence at protein level"/>
<organism>
    <name type="scientific">Homo sapiens</name>
    <name type="common">Human</name>
    <dbReference type="NCBI Taxonomy" id="9606"/>
    <lineage>
        <taxon>Eukaryota</taxon>
        <taxon>Metazoa</taxon>
        <taxon>Chordata</taxon>
        <taxon>Craniata</taxon>
        <taxon>Vertebrata</taxon>
        <taxon>Euteleostomi</taxon>
        <taxon>Mammalia</taxon>
        <taxon>Eutheria</taxon>
        <taxon>Euarchontoglires</taxon>
        <taxon>Primates</taxon>
        <taxon>Haplorrhini</taxon>
        <taxon>Catarrhini</taxon>
        <taxon>Hominidae</taxon>
        <taxon>Homo</taxon>
    </lineage>
</organism>
<comment type="function">
    <text evidence="4">Accessory subunit of the mitochondrial membrane respiratory chain NADH dehydrogenase (Complex I), that is believed not to be involved in catalysis. Complex I functions in the transfer of electrons from NADH to the respiratory chain. The immediate electron acceptor for the enzyme is believed to be ubiquinone.</text>
</comment>
<comment type="subunit">
    <text evidence="3 4">Complex I is composed of 45 different subunits.</text>
</comment>
<comment type="interaction">
    <interactant intactId="EBI-746417">
        <id>Q16718</id>
    </interactant>
    <interactant intactId="EBI-399080">
        <id>Q92993</id>
        <label>KAT5</label>
    </interactant>
    <organismsDiffer>false</organismsDiffer>
    <experiments>3</experiments>
</comment>
<comment type="interaction">
    <interactant intactId="EBI-746417">
        <id>Q16718</id>
    </interactant>
    <interactant intactId="EBI-11742507">
        <id>Q8TAP4-4</id>
        <label>LMO3</label>
    </interactant>
    <organismsDiffer>false</organismsDiffer>
    <experiments>3</experiments>
</comment>
<comment type="interaction">
    <interactant intactId="EBI-746417">
        <id>Q16718</id>
    </interactant>
    <interactant intactId="EBI-1224896">
        <id>O75489</id>
        <label>NDUFS3</label>
    </interactant>
    <organismsDiffer>false</organismsDiffer>
    <experiments>13</experiments>
</comment>
<comment type="interaction">
    <interactant intactId="EBI-746417">
        <id>Q16718</id>
    </interactant>
    <interactant intactId="EBI-742388">
        <id>Q9H8W4</id>
        <label>PLEKHF2</label>
    </interactant>
    <organismsDiffer>false</organismsDiffer>
    <experiments>3</experiments>
</comment>
<comment type="interaction">
    <interactant intactId="EBI-746417">
        <id>Q16718</id>
    </interactant>
    <interactant intactId="EBI-9090795">
        <id>Q15047-2</id>
        <label>SETDB1</label>
    </interactant>
    <organismsDiffer>false</organismsDiffer>
    <experiments>3</experiments>
</comment>
<comment type="interaction">
    <interactant intactId="EBI-746417">
        <id>Q16718</id>
    </interactant>
    <interactant intactId="EBI-711909">
        <id>P02766</id>
        <label>TTR</label>
    </interactant>
    <organismsDiffer>false</organismsDiffer>
    <experiments>3</experiments>
</comment>
<comment type="interaction">
    <interactant intactId="EBI-746417">
        <id>Q16718</id>
    </interactant>
    <interactant intactId="EBI-359832">
        <id>P61981</id>
        <label>YWHAG</label>
    </interactant>
    <organismsDiffer>false</organismsDiffer>
    <experiments>3</experiments>
</comment>
<comment type="subcellular location">
    <subcellularLocation>
        <location evidence="8">Mitochondrion inner membrane</location>
        <topology evidence="7">Peripheral membrane protein</topology>
        <orientation evidence="7">Matrix side</orientation>
    </subcellularLocation>
</comment>
<comment type="alternative products">
    <event type="alternative splicing"/>
    <isoform>
        <id>Q16718-1</id>
        <name>1</name>
        <sequence type="displayed"/>
    </isoform>
    <isoform>
        <id>Q16718-2</id>
        <name>2</name>
        <sequence type="described" ref="VSP_055164"/>
    </isoform>
</comment>
<comment type="tissue specificity">
    <text evidence="5">Expressed in all tissues examined with highest levels in heart, skeletal muscle and brain.</text>
</comment>
<comment type="similarity">
    <text evidence="7">Belongs to the complex I NDUFA5 subunit family.</text>
</comment>
<gene>
    <name type="primary">NDUFA5</name>
</gene>
<accession>Q16718</accession>
<accession>B2RD98</accession>
<accession>Q5H9R2</accession>
<accession>Q6IRX7</accession>
<evidence type="ECO:0000250" key="1">
    <source>
        <dbReference type="UniProtKB" id="P23935"/>
    </source>
</evidence>
<evidence type="ECO:0000250" key="2">
    <source>
        <dbReference type="UniProtKB" id="Q9CPP6"/>
    </source>
</evidence>
<evidence type="ECO:0000269" key="3">
    <source>
    </source>
</evidence>
<evidence type="ECO:0000269" key="4">
    <source>
    </source>
</evidence>
<evidence type="ECO:0000269" key="5">
    <source>
    </source>
</evidence>
<evidence type="ECO:0000303" key="6">
    <source>
    </source>
</evidence>
<evidence type="ECO:0000305" key="7"/>
<evidence type="ECO:0000305" key="8">
    <source>
    </source>
</evidence>
<evidence type="ECO:0007744" key="9">
    <source>
    </source>
</evidence>
<evidence type="ECO:0007829" key="10">
    <source>
        <dbReference type="PDB" id="5XTB"/>
    </source>
</evidence>
<sequence>MAGVLKKTTGLVGLAVCNTPHERLRILYTKILDVLEEIPKNAAYRKYTEQITNEKLAMVKAEPDVKKLEDQLQGGQLEEVILQAEHELNLARKMREWKLWEPLVEEPPADQWKWPI</sequence>
<name>NDUA5_HUMAN</name>
<dbReference type="EMBL" id="U53468">
    <property type="protein sequence ID" value="AAB02224.1"/>
    <property type="molecule type" value="mRNA"/>
</dbReference>
<dbReference type="EMBL" id="U64028">
    <property type="protein sequence ID" value="AAB37259.1"/>
    <property type="molecule type" value="mRNA"/>
</dbReference>
<dbReference type="EMBL" id="AF044418">
    <property type="protein sequence ID" value="AAD21526.1"/>
    <property type="molecule type" value="Genomic_DNA"/>
</dbReference>
<dbReference type="EMBL" id="AF044415">
    <property type="protein sequence ID" value="AAD21526.1"/>
    <property type="status" value="JOINED"/>
    <property type="molecule type" value="Genomic_DNA"/>
</dbReference>
<dbReference type="EMBL" id="AF044416">
    <property type="protein sequence ID" value="AAD21526.1"/>
    <property type="status" value="JOINED"/>
    <property type="molecule type" value="Genomic_DNA"/>
</dbReference>
<dbReference type="EMBL" id="AF044417">
    <property type="protein sequence ID" value="AAD21526.1"/>
    <property type="status" value="JOINED"/>
    <property type="molecule type" value="Genomic_DNA"/>
</dbReference>
<dbReference type="EMBL" id="BT006695">
    <property type="protein sequence ID" value="AAP35341.1"/>
    <property type="molecule type" value="mRNA"/>
</dbReference>
<dbReference type="EMBL" id="AK315458">
    <property type="protein sequence ID" value="BAG37845.1"/>
    <property type="molecule type" value="mRNA"/>
</dbReference>
<dbReference type="EMBL" id="CR933664">
    <property type="protein sequence ID" value="CAI45962.1"/>
    <property type="molecule type" value="mRNA"/>
</dbReference>
<dbReference type="EMBL" id="AC073323">
    <property type="protein sequence ID" value="AAQ96854.1"/>
    <property type="molecule type" value="Genomic_DNA"/>
</dbReference>
<dbReference type="EMBL" id="CH471070">
    <property type="protein sequence ID" value="EAW83588.1"/>
    <property type="molecule type" value="Genomic_DNA"/>
</dbReference>
<dbReference type="EMBL" id="BC000813">
    <property type="protein sequence ID" value="AAH00813.1"/>
    <property type="molecule type" value="mRNA"/>
</dbReference>
<dbReference type="EMBL" id="BC020821">
    <property type="protein sequence ID" value="AAH20821.1"/>
    <property type="molecule type" value="mRNA"/>
</dbReference>
<dbReference type="EMBL" id="BC070236">
    <property type="protein sequence ID" value="AAH70236.1"/>
    <property type="molecule type" value="mRNA"/>
</dbReference>
<dbReference type="EMBL" id="BC070237">
    <property type="protein sequence ID" value="AAH70237.1"/>
    <property type="molecule type" value="mRNA"/>
</dbReference>
<dbReference type="CCDS" id="CCDS5788.1">
    <molecule id="Q16718-1"/>
</dbReference>
<dbReference type="CCDS" id="CCDS64760.1">
    <molecule id="Q16718-2"/>
</dbReference>
<dbReference type="PIR" id="G02526">
    <property type="entry name" value="G02526"/>
</dbReference>
<dbReference type="RefSeq" id="NP_001269348.1">
    <property type="nucleotide sequence ID" value="NM_001282419.2"/>
</dbReference>
<dbReference type="RefSeq" id="NP_001269349.1">
    <molecule id="Q16718-2"/>
    <property type="nucleotide sequence ID" value="NM_001282420.3"/>
</dbReference>
<dbReference type="RefSeq" id="NP_001269350.1">
    <property type="nucleotide sequence ID" value="NM_001282421.2"/>
</dbReference>
<dbReference type="RefSeq" id="NP_001269351.1">
    <property type="nucleotide sequence ID" value="NM_001282422.2"/>
</dbReference>
<dbReference type="RefSeq" id="NP_004991.1">
    <molecule id="Q16718-1"/>
    <property type="nucleotide sequence ID" value="NM_005000.5"/>
</dbReference>
<dbReference type="PDB" id="5XTB">
    <property type="method" value="EM"/>
    <property type="resolution" value="3.40 A"/>
    <property type="chains" value="H=5-116"/>
</dbReference>
<dbReference type="PDB" id="5XTD">
    <property type="method" value="EM"/>
    <property type="resolution" value="3.70 A"/>
    <property type="chains" value="H=5-116"/>
</dbReference>
<dbReference type="PDB" id="5XTH">
    <property type="method" value="EM"/>
    <property type="resolution" value="3.90 A"/>
    <property type="chains" value="H=5-116"/>
</dbReference>
<dbReference type="PDB" id="5XTI">
    <property type="method" value="EM"/>
    <property type="resolution" value="17.40 A"/>
    <property type="chains" value="BH/H=5-116"/>
</dbReference>
<dbReference type="PDBsum" id="5XTB"/>
<dbReference type="PDBsum" id="5XTD"/>
<dbReference type="PDBsum" id="5XTH"/>
<dbReference type="PDBsum" id="5XTI"/>
<dbReference type="SMR" id="Q16718"/>
<dbReference type="BioGRID" id="110778">
    <property type="interactions" value="243"/>
</dbReference>
<dbReference type="ComplexPortal" id="CPX-577">
    <property type="entry name" value="Mitochondrial respiratory chain complex I"/>
</dbReference>
<dbReference type="CORUM" id="Q16718"/>
<dbReference type="FunCoup" id="Q16718">
    <property type="interactions" value="1055"/>
</dbReference>
<dbReference type="IntAct" id="Q16718">
    <property type="interactions" value="95"/>
</dbReference>
<dbReference type="MINT" id="Q16718"/>
<dbReference type="STRING" id="9606.ENSP00000417142"/>
<dbReference type="BindingDB" id="Q16718"/>
<dbReference type="ChEMBL" id="CHEMBL2363065"/>
<dbReference type="DrugBank" id="DB00157">
    <property type="generic name" value="NADH"/>
</dbReference>
<dbReference type="DrugCentral" id="Q16718"/>
<dbReference type="CarbonylDB" id="Q16718"/>
<dbReference type="iPTMnet" id="Q16718"/>
<dbReference type="PhosphoSitePlus" id="Q16718"/>
<dbReference type="SwissPalm" id="Q16718"/>
<dbReference type="BioMuta" id="NDUFA5"/>
<dbReference type="DMDM" id="2499316"/>
<dbReference type="jPOST" id="Q16718"/>
<dbReference type="MassIVE" id="Q16718"/>
<dbReference type="PaxDb" id="9606-ENSP00000417142"/>
<dbReference type="PeptideAtlas" id="Q16718"/>
<dbReference type="ProteomicsDB" id="61039">
    <molecule id="Q16718-1"/>
</dbReference>
<dbReference type="ProteomicsDB" id="62900"/>
<dbReference type="Pumba" id="Q16718"/>
<dbReference type="TopDownProteomics" id="Q16718-1">
    <molecule id="Q16718-1"/>
</dbReference>
<dbReference type="Antibodypedia" id="31753">
    <property type="antibodies" value="192 antibodies from 30 providers"/>
</dbReference>
<dbReference type="DNASU" id="4698"/>
<dbReference type="Ensembl" id="ENST00000355749.7">
    <molecule id="Q16718-1"/>
    <property type="protein sequence ID" value="ENSP00000347988.2"/>
    <property type="gene ID" value="ENSG00000128609.16"/>
</dbReference>
<dbReference type="Ensembl" id="ENST00000471770.5">
    <molecule id="Q16718-2"/>
    <property type="protein sequence ID" value="ENSP00000417142.1"/>
    <property type="gene ID" value="ENSG00000128609.16"/>
</dbReference>
<dbReference type="GeneID" id="4698"/>
<dbReference type="KEGG" id="hsa:4698"/>
<dbReference type="MANE-Select" id="ENST00000355749.7">
    <property type="protein sequence ID" value="ENSP00000347988.2"/>
    <property type="RefSeq nucleotide sequence ID" value="NM_005000.5"/>
    <property type="RefSeq protein sequence ID" value="NP_004991.1"/>
</dbReference>
<dbReference type="UCSC" id="uc003vks.4">
    <molecule id="Q16718-1"/>
    <property type="organism name" value="human"/>
</dbReference>
<dbReference type="AGR" id="HGNC:7688"/>
<dbReference type="CTD" id="4698"/>
<dbReference type="DisGeNET" id="4698"/>
<dbReference type="GeneCards" id="NDUFA5"/>
<dbReference type="HGNC" id="HGNC:7688">
    <property type="gene designation" value="NDUFA5"/>
</dbReference>
<dbReference type="HPA" id="ENSG00000128609">
    <property type="expression patterns" value="Tissue enhanced (tongue)"/>
</dbReference>
<dbReference type="MalaCards" id="NDUFA5"/>
<dbReference type="MIM" id="601677">
    <property type="type" value="gene"/>
</dbReference>
<dbReference type="neXtProt" id="NX_Q16718"/>
<dbReference type="OpenTargets" id="ENSG00000128609"/>
<dbReference type="PharmGKB" id="PA31494"/>
<dbReference type="VEuPathDB" id="HostDB:ENSG00000128609"/>
<dbReference type="eggNOG" id="KOG3365">
    <property type="taxonomic scope" value="Eukaryota"/>
</dbReference>
<dbReference type="GeneTree" id="ENSGT00390000008099"/>
<dbReference type="HOGENOM" id="CLU_099943_2_0_1"/>
<dbReference type="InParanoid" id="Q16718"/>
<dbReference type="OMA" id="ENQWKWP"/>
<dbReference type="OrthoDB" id="286811at2759"/>
<dbReference type="PAN-GO" id="Q16718">
    <property type="GO annotations" value="2 GO annotations based on evolutionary models"/>
</dbReference>
<dbReference type="PhylomeDB" id="Q16718"/>
<dbReference type="TreeFam" id="TF313785"/>
<dbReference type="BioCyc" id="MetaCyc:HS05206-MONOMER"/>
<dbReference type="PathwayCommons" id="Q16718"/>
<dbReference type="Reactome" id="R-HSA-611105">
    <property type="pathway name" value="Respiratory electron transport"/>
</dbReference>
<dbReference type="Reactome" id="R-HSA-6799198">
    <property type="pathway name" value="Complex I biogenesis"/>
</dbReference>
<dbReference type="Reactome" id="R-HSA-9013408">
    <property type="pathway name" value="RHOG GTPase cycle"/>
</dbReference>
<dbReference type="SignaLink" id="Q16718"/>
<dbReference type="SIGNOR" id="Q16718"/>
<dbReference type="BioGRID-ORCS" id="4698">
    <property type="hits" value="175 hits in 1123 CRISPR screens"/>
</dbReference>
<dbReference type="CD-CODE" id="91857CE7">
    <property type="entry name" value="Nucleolus"/>
</dbReference>
<dbReference type="CD-CODE" id="FB4E32DD">
    <property type="entry name" value="Presynaptic clusters and postsynaptic densities"/>
</dbReference>
<dbReference type="ChiTaRS" id="NDUFA5">
    <property type="organism name" value="human"/>
</dbReference>
<dbReference type="GeneWiki" id="NDUFA5"/>
<dbReference type="GenomeRNAi" id="4698"/>
<dbReference type="Pharos" id="Q16718">
    <property type="development level" value="Tclin"/>
</dbReference>
<dbReference type="PRO" id="PR:Q16718"/>
<dbReference type="Proteomes" id="UP000005640">
    <property type="component" value="Chromosome 7"/>
</dbReference>
<dbReference type="RNAct" id="Q16718">
    <property type="molecule type" value="protein"/>
</dbReference>
<dbReference type="Bgee" id="ENSG00000128609">
    <property type="expression patterns" value="Expressed in endothelial cell and 204 other cell types or tissues"/>
</dbReference>
<dbReference type="ExpressionAtlas" id="Q16718">
    <property type="expression patterns" value="baseline and differential"/>
</dbReference>
<dbReference type="GO" id="GO:0005743">
    <property type="term" value="C:mitochondrial inner membrane"/>
    <property type="evidence" value="ECO:0000314"/>
    <property type="project" value="ComplexPortal"/>
</dbReference>
<dbReference type="GO" id="GO:0005739">
    <property type="term" value="C:mitochondrion"/>
    <property type="evidence" value="ECO:0006056"/>
    <property type="project" value="FlyBase"/>
</dbReference>
<dbReference type="GO" id="GO:0045271">
    <property type="term" value="C:respiratory chain complex I"/>
    <property type="evidence" value="ECO:0000314"/>
    <property type="project" value="UniProtKB"/>
</dbReference>
<dbReference type="GO" id="GO:0008137">
    <property type="term" value="F:NADH dehydrogenase (ubiquinone) activity"/>
    <property type="evidence" value="ECO:0000304"/>
    <property type="project" value="ProtInc"/>
</dbReference>
<dbReference type="GO" id="GO:0009060">
    <property type="term" value="P:aerobic respiration"/>
    <property type="evidence" value="ECO:0000303"/>
    <property type="project" value="ComplexPortal"/>
</dbReference>
<dbReference type="GO" id="GO:0006120">
    <property type="term" value="P:mitochondrial electron transport, NADH to ubiquinone"/>
    <property type="evidence" value="ECO:0000303"/>
    <property type="project" value="UniProtKB"/>
</dbReference>
<dbReference type="GO" id="GO:0042776">
    <property type="term" value="P:proton motive force-driven mitochondrial ATP synthesis"/>
    <property type="evidence" value="ECO:0000303"/>
    <property type="project" value="ComplexPortal"/>
</dbReference>
<dbReference type="GO" id="GO:0022904">
    <property type="term" value="P:respiratory electron transport chain"/>
    <property type="evidence" value="ECO:0000318"/>
    <property type="project" value="GO_Central"/>
</dbReference>
<dbReference type="InterPro" id="IPR006806">
    <property type="entry name" value="NDUFA5"/>
</dbReference>
<dbReference type="PANTHER" id="PTHR12653:SF0">
    <property type="entry name" value="NADH DEHYDROGENASE [UBIQUINONE] 1 ALPHA SUBCOMPLEX SUBUNIT 5"/>
    <property type="match status" value="1"/>
</dbReference>
<dbReference type="PANTHER" id="PTHR12653">
    <property type="entry name" value="NADH-UBIQUINONE OXIDOREDUCTASE 13 KD-B SUBUNIT"/>
    <property type="match status" value="1"/>
</dbReference>
<dbReference type="Pfam" id="PF04716">
    <property type="entry name" value="ETC_C1_NDUFA5"/>
    <property type="match status" value="1"/>
</dbReference>
<protein>
    <recommendedName>
        <fullName>NADH dehydrogenase [ubiquinone] 1 alpha subcomplex subunit 5</fullName>
    </recommendedName>
    <alternativeName>
        <fullName>Complex I subunit B13</fullName>
    </alternativeName>
    <alternativeName>
        <fullName>Complex I-13kD-B</fullName>
        <shortName>CI-13kD-B</shortName>
    </alternativeName>
    <alternativeName>
        <fullName>NADH-ubiquinone oxidoreductase 13 kDa-B subunit</fullName>
    </alternativeName>
</protein>
<feature type="initiator methionine" description="Removed" evidence="1">
    <location>
        <position position="1"/>
    </location>
</feature>
<feature type="chain" id="PRO_0000118632" description="NADH dehydrogenase [ubiquinone] 1 alpha subcomplex subunit 5">
    <location>
        <begin position="2"/>
        <end position="116"/>
    </location>
</feature>
<feature type="modified residue" description="N-acetylalanine" evidence="1">
    <location>
        <position position="2"/>
    </location>
</feature>
<feature type="modified residue" description="N6-acetyllysine" evidence="9">
    <location>
        <position position="30"/>
    </location>
</feature>
<feature type="modified residue" description="N6-acetyllysine" evidence="2">
    <location>
        <position position="46"/>
    </location>
</feature>
<feature type="modified residue" description="N6-acetyllysine" evidence="9">
    <location>
        <position position="60"/>
    </location>
</feature>
<feature type="modified residue" description="N6-acetyllysine; alternate" evidence="2">
    <location>
        <position position="98"/>
    </location>
</feature>
<feature type="modified residue" description="N6-succinyllysine; alternate" evidence="2">
    <location>
        <position position="98"/>
    </location>
</feature>
<feature type="splice variant" id="VSP_055164" description="In isoform 2." evidence="6">
    <original>MAGVLKK</original>
    <variation>MPYRVGQ</variation>
    <location>
        <begin position="1"/>
        <end position="7"/>
    </location>
</feature>
<feature type="sequence conflict" description="In Ref. 9; AAH70236." evidence="7" ref="9">
    <original>T</original>
    <variation>I</variation>
    <location>
        <position position="52"/>
    </location>
</feature>
<feature type="strand" evidence="10">
    <location>
        <begin position="11"/>
        <end position="13"/>
    </location>
</feature>
<feature type="helix" evidence="10">
    <location>
        <begin position="20"/>
        <end position="35"/>
    </location>
</feature>
<feature type="helix" evidence="10">
    <location>
        <begin position="43"/>
        <end position="61"/>
    </location>
</feature>
<feature type="helix" evidence="10">
    <location>
        <begin position="65"/>
        <end position="71"/>
    </location>
</feature>
<feature type="turn" evidence="10">
    <location>
        <begin position="77"/>
        <end position="79"/>
    </location>
</feature>
<feature type="helix" evidence="10">
    <location>
        <begin position="80"/>
        <end position="94"/>
    </location>
</feature>
<feature type="helix" evidence="10">
    <location>
        <begin position="95"/>
        <end position="97"/>
    </location>
</feature>
<feature type="turn" evidence="10">
    <location>
        <begin position="109"/>
        <end position="112"/>
    </location>
</feature>
<keyword id="KW-0002">3D-structure</keyword>
<keyword id="KW-0007">Acetylation</keyword>
<keyword id="KW-0025">Alternative splicing</keyword>
<keyword id="KW-0249">Electron transport</keyword>
<keyword id="KW-0472">Membrane</keyword>
<keyword id="KW-0496">Mitochondrion</keyword>
<keyword id="KW-0999">Mitochondrion inner membrane</keyword>
<keyword id="KW-1267">Proteomics identification</keyword>
<keyword id="KW-1185">Reference proteome</keyword>
<keyword id="KW-0679">Respiratory chain</keyword>
<keyword id="KW-0813">Transport</keyword>
<reference key="1">
    <citation type="journal article" date="1997" name="Biochim. Biophys. Acta">
        <title>A human cDNA encoding the homologue of NADH:ubiquinone oxidoreductase subunit B13.</title>
        <authorList>
            <person name="Pata I."/>
            <person name="Tensing K."/>
            <person name="Metspalu A."/>
        </authorList>
    </citation>
    <scope>NUCLEOTIDE SEQUENCE [MRNA] (ISOFORM 1)</scope>
</reference>
<reference key="2">
    <citation type="journal article" date="1997" name="Mamm. Genome">
        <title>Cloning of the human NADH:ubiquinone oxidoreductase subunit B13: localization to chromosome 7q32 and identification of a pseudogene on 11p15.</title>
        <authorList>
            <person name="Russell M.W."/>
            <person name="du Manoir S."/>
            <person name="Collins F.S."/>
            <person name="Brody L.C."/>
        </authorList>
    </citation>
    <scope>NUCLEOTIDE SEQUENCE [MRNA] (ISOFORM 1)</scope>
</reference>
<reference key="3">
    <citation type="journal article" date="1999" name="Cytogenet. Cell Genet.">
        <title>Genomic organization of the human complex I 13-kDa subunit gene NDUFA5.</title>
        <authorList>
            <person name="Tensing K."/>
            <person name="Pata I."/>
            <person name="Wittig I."/>
            <person name="Wehnert M."/>
            <person name="Metspalu A."/>
        </authorList>
    </citation>
    <scope>NUCLEOTIDE SEQUENCE [GENOMIC DNA]</scope>
</reference>
<reference key="4">
    <citation type="submission" date="2003-05" db="EMBL/GenBank/DDBJ databases">
        <title>Cloning of human full-length CDSs in BD Creator(TM) system donor vector.</title>
        <authorList>
            <person name="Kalnine N."/>
            <person name="Chen X."/>
            <person name="Rolfs A."/>
            <person name="Halleck A."/>
            <person name="Hines L."/>
            <person name="Eisenstein S."/>
            <person name="Koundinya M."/>
            <person name="Raphael J."/>
            <person name="Moreira D."/>
            <person name="Kelley T."/>
            <person name="LaBaer J."/>
            <person name="Lin Y."/>
            <person name="Phelan M."/>
            <person name="Farmer A."/>
        </authorList>
    </citation>
    <scope>NUCLEOTIDE SEQUENCE [LARGE SCALE MRNA] (ISOFORM 1)</scope>
</reference>
<reference key="5">
    <citation type="journal article" date="2004" name="Nat. Genet.">
        <title>Complete sequencing and characterization of 21,243 full-length human cDNAs.</title>
        <authorList>
            <person name="Ota T."/>
            <person name="Suzuki Y."/>
            <person name="Nishikawa T."/>
            <person name="Otsuki T."/>
            <person name="Sugiyama T."/>
            <person name="Irie R."/>
            <person name="Wakamatsu A."/>
            <person name="Hayashi K."/>
            <person name="Sato H."/>
            <person name="Nagai K."/>
            <person name="Kimura K."/>
            <person name="Makita H."/>
            <person name="Sekine M."/>
            <person name="Obayashi M."/>
            <person name="Nishi T."/>
            <person name="Shibahara T."/>
            <person name="Tanaka T."/>
            <person name="Ishii S."/>
            <person name="Yamamoto J."/>
            <person name="Saito K."/>
            <person name="Kawai Y."/>
            <person name="Isono Y."/>
            <person name="Nakamura Y."/>
            <person name="Nagahari K."/>
            <person name="Murakami K."/>
            <person name="Yasuda T."/>
            <person name="Iwayanagi T."/>
            <person name="Wagatsuma M."/>
            <person name="Shiratori A."/>
            <person name="Sudo H."/>
            <person name="Hosoiri T."/>
            <person name="Kaku Y."/>
            <person name="Kodaira H."/>
            <person name="Kondo H."/>
            <person name="Sugawara M."/>
            <person name="Takahashi M."/>
            <person name="Kanda K."/>
            <person name="Yokoi T."/>
            <person name="Furuya T."/>
            <person name="Kikkawa E."/>
            <person name="Omura Y."/>
            <person name="Abe K."/>
            <person name="Kamihara K."/>
            <person name="Katsuta N."/>
            <person name="Sato K."/>
            <person name="Tanikawa M."/>
            <person name="Yamazaki M."/>
            <person name="Ninomiya K."/>
            <person name="Ishibashi T."/>
            <person name="Yamashita H."/>
            <person name="Murakawa K."/>
            <person name="Fujimori K."/>
            <person name="Tanai H."/>
            <person name="Kimata M."/>
            <person name="Watanabe M."/>
            <person name="Hiraoka S."/>
            <person name="Chiba Y."/>
            <person name="Ishida S."/>
            <person name="Ono Y."/>
            <person name="Takiguchi S."/>
            <person name="Watanabe S."/>
            <person name="Yosida M."/>
            <person name="Hotuta T."/>
            <person name="Kusano J."/>
            <person name="Kanehori K."/>
            <person name="Takahashi-Fujii A."/>
            <person name="Hara H."/>
            <person name="Tanase T.-O."/>
            <person name="Nomura Y."/>
            <person name="Togiya S."/>
            <person name="Komai F."/>
            <person name="Hara R."/>
            <person name="Takeuchi K."/>
            <person name="Arita M."/>
            <person name="Imose N."/>
            <person name="Musashino K."/>
            <person name="Yuuki H."/>
            <person name="Oshima A."/>
            <person name="Sasaki N."/>
            <person name="Aotsuka S."/>
            <person name="Yoshikawa Y."/>
            <person name="Matsunawa H."/>
            <person name="Ichihara T."/>
            <person name="Shiohata N."/>
            <person name="Sano S."/>
            <person name="Moriya S."/>
            <person name="Momiyama H."/>
            <person name="Satoh N."/>
            <person name="Takami S."/>
            <person name="Terashima Y."/>
            <person name="Suzuki O."/>
            <person name="Nakagawa S."/>
            <person name="Senoh A."/>
            <person name="Mizoguchi H."/>
            <person name="Goto Y."/>
            <person name="Shimizu F."/>
            <person name="Wakebe H."/>
            <person name="Hishigaki H."/>
            <person name="Watanabe T."/>
            <person name="Sugiyama A."/>
            <person name="Takemoto M."/>
            <person name="Kawakami B."/>
            <person name="Yamazaki M."/>
            <person name="Watanabe K."/>
            <person name="Kumagai A."/>
            <person name="Itakura S."/>
            <person name="Fukuzumi Y."/>
            <person name="Fujimori Y."/>
            <person name="Komiyama M."/>
            <person name="Tashiro H."/>
            <person name="Tanigami A."/>
            <person name="Fujiwara T."/>
            <person name="Ono T."/>
            <person name="Yamada K."/>
            <person name="Fujii Y."/>
            <person name="Ozaki K."/>
            <person name="Hirao M."/>
            <person name="Ohmori Y."/>
            <person name="Kawabata A."/>
            <person name="Hikiji T."/>
            <person name="Kobatake N."/>
            <person name="Inagaki H."/>
            <person name="Ikema Y."/>
            <person name="Okamoto S."/>
            <person name="Okitani R."/>
            <person name="Kawakami T."/>
            <person name="Noguchi S."/>
            <person name="Itoh T."/>
            <person name="Shigeta K."/>
            <person name="Senba T."/>
            <person name="Matsumura K."/>
            <person name="Nakajima Y."/>
            <person name="Mizuno T."/>
            <person name="Morinaga M."/>
            <person name="Sasaki M."/>
            <person name="Togashi T."/>
            <person name="Oyama M."/>
            <person name="Hata H."/>
            <person name="Watanabe M."/>
            <person name="Komatsu T."/>
            <person name="Mizushima-Sugano J."/>
            <person name="Satoh T."/>
            <person name="Shirai Y."/>
            <person name="Takahashi Y."/>
            <person name="Nakagawa K."/>
            <person name="Okumura K."/>
            <person name="Nagase T."/>
            <person name="Nomura N."/>
            <person name="Kikuchi H."/>
            <person name="Masuho Y."/>
            <person name="Yamashita R."/>
            <person name="Nakai K."/>
            <person name="Yada T."/>
            <person name="Nakamura Y."/>
            <person name="Ohara O."/>
            <person name="Isogai T."/>
            <person name="Sugano S."/>
        </authorList>
    </citation>
    <scope>NUCLEOTIDE SEQUENCE [LARGE SCALE MRNA] (ISOFORM 1)</scope>
</reference>
<reference key="6">
    <citation type="journal article" date="2007" name="BMC Genomics">
        <title>The full-ORF clone resource of the German cDNA consortium.</title>
        <authorList>
            <person name="Bechtel S."/>
            <person name="Rosenfelder H."/>
            <person name="Duda A."/>
            <person name="Schmidt C.P."/>
            <person name="Ernst U."/>
            <person name="Wellenreuther R."/>
            <person name="Mehrle A."/>
            <person name="Schuster C."/>
            <person name="Bahr A."/>
            <person name="Bloecker H."/>
            <person name="Heubner D."/>
            <person name="Hoerlein A."/>
            <person name="Michel G."/>
            <person name="Wedler H."/>
            <person name="Koehrer K."/>
            <person name="Ottenwaelder B."/>
            <person name="Poustka A."/>
            <person name="Wiemann S."/>
            <person name="Schupp I."/>
        </authorList>
    </citation>
    <scope>NUCLEOTIDE SEQUENCE [LARGE SCALE MRNA] (ISOFORM 2)</scope>
    <source>
        <tissue>Retina</tissue>
    </source>
</reference>
<reference key="7">
    <citation type="journal article" date="2003" name="Nature">
        <title>The DNA sequence of human chromosome 7.</title>
        <authorList>
            <person name="Hillier L.W."/>
            <person name="Fulton R.S."/>
            <person name="Fulton L.A."/>
            <person name="Graves T.A."/>
            <person name="Pepin K.H."/>
            <person name="Wagner-McPherson C."/>
            <person name="Layman D."/>
            <person name="Maas J."/>
            <person name="Jaeger S."/>
            <person name="Walker R."/>
            <person name="Wylie K."/>
            <person name="Sekhon M."/>
            <person name="Becker M.C."/>
            <person name="O'Laughlin M.D."/>
            <person name="Schaller M.E."/>
            <person name="Fewell G.A."/>
            <person name="Delehaunty K.D."/>
            <person name="Miner T.L."/>
            <person name="Nash W.E."/>
            <person name="Cordes M."/>
            <person name="Du H."/>
            <person name="Sun H."/>
            <person name="Edwards J."/>
            <person name="Bradshaw-Cordum H."/>
            <person name="Ali J."/>
            <person name="Andrews S."/>
            <person name="Isak A."/>
            <person name="Vanbrunt A."/>
            <person name="Nguyen C."/>
            <person name="Du F."/>
            <person name="Lamar B."/>
            <person name="Courtney L."/>
            <person name="Kalicki J."/>
            <person name="Ozersky P."/>
            <person name="Bielicki L."/>
            <person name="Scott K."/>
            <person name="Holmes A."/>
            <person name="Harkins R."/>
            <person name="Harris A."/>
            <person name="Strong C.M."/>
            <person name="Hou S."/>
            <person name="Tomlinson C."/>
            <person name="Dauphin-Kohlberg S."/>
            <person name="Kozlowicz-Reilly A."/>
            <person name="Leonard S."/>
            <person name="Rohlfing T."/>
            <person name="Rock S.M."/>
            <person name="Tin-Wollam A.-M."/>
            <person name="Abbott A."/>
            <person name="Minx P."/>
            <person name="Maupin R."/>
            <person name="Strowmatt C."/>
            <person name="Latreille P."/>
            <person name="Miller N."/>
            <person name="Johnson D."/>
            <person name="Murray J."/>
            <person name="Woessner J.P."/>
            <person name="Wendl M.C."/>
            <person name="Yang S.-P."/>
            <person name="Schultz B.R."/>
            <person name="Wallis J.W."/>
            <person name="Spieth J."/>
            <person name="Bieri T.A."/>
            <person name="Nelson J.O."/>
            <person name="Berkowicz N."/>
            <person name="Wohldmann P.E."/>
            <person name="Cook L.L."/>
            <person name="Hickenbotham M.T."/>
            <person name="Eldred J."/>
            <person name="Williams D."/>
            <person name="Bedell J.A."/>
            <person name="Mardis E.R."/>
            <person name="Clifton S.W."/>
            <person name="Chissoe S.L."/>
            <person name="Marra M.A."/>
            <person name="Raymond C."/>
            <person name="Haugen E."/>
            <person name="Gillett W."/>
            <person name="Zhou Y."/>
            <person name="James R."/>
            <person name="Phelps K."/>
            <person name="Iadanoto S."/>
            <person name="Bubb K."/>
            <person name="Simms E."/>
            <person name="Levy R."/>
            <person name="Clendenning J."/>
            <person name="Kaul R."/>
            <person name="Kent W.J."/>
            <person name="Furey T.S."/>
            <person name="Baertsch R.A."/>
            <person name="Brent M.R."/>
            <person name="Keibler E."/>
            <person name="Flicek P."/>
            <person name="Bork P."/>
            <person name="Suyama M."/>
            <person name="Bailey J.A."/>
            <person name="Portnoy M.E."/>
            <person name="Torrents D."/>
            <person name="Chinwalla A.T."/>
            <person name="Gish W.R."/>
            <person name="Eddy S.R."/>
            <person name="McPherson J.D."/>
            <person name="Olson M.V."/>
            <person name="Eichler E.E."/>
            <person name="Green E.D."/>
            <person name="Waterston R.H."/>
            <person name="Wilson R.K."/>
        </authorList>
    </citation>
    <scope>NUCLEOTIDE SEQUENCE [LARGE SCALE GENOMIC DNA]</scope>
</reference>
<reference key="8">
    <citation type="submission" date="2005-07" db="EMBL/GenBank/DDBJ databases">
        <authorList>
            <person name="Mural R.J."/>
            <person name="Istrail S."/>
            <person name="Sutton G.G."/>
            <person name="Florea L."/>
            <person name="Halpern A.L."/>
            <person name="Mobarry C.M."/>
            <person name="Lippert R."/>
            <person name="Walenz B."/>
            <person name="Shatkay H."/>
            <person name="Dew I."/>
            <person name="Miller J.R."/>
            <person name="Flanigan M.J."/>
            <person name="Edwards N.J."/>
            <person name="Bolanos R."/>
            <person name="Fasulo D."/>
            <person name="Halldorsson B.V."/>
            <person name="Hannenhalli S."/>
            <person name="Turner R."/>
            <person name="Yooseph S."/>
            <person name="Lu F."/>
            <person name="Nusskern D.R."/>
            <person name="Shue B.C."/>
            <person name="Zheng X.H."/>
            <person name="Zhong F."/>
            <person name="Delcher A.L."/>
            <person name="Huson D.H."/>
            <person name="Kravitz S.A."/>
            <person name="Mouchard L."/>
            <person name="Reinert K."/>
            <person name="Remington K.A."/>
            <person name="Clark A.G."/>
            <person name="Waterman M.S."/>
            <person name="Eichler E.E."/>
            <person name="Adams M.D."/>
            <person name="Hunkapiller M.W."/>
            <person name="Myers E.W."/>
            <person name="Venter J.C."/>
        </authorList>
    </citation>
    <scope>NUCLEOTIDE SEQUENCE [LARGE SCALE GENOMIC DNA]</scope>
</reference>
<reference key="9">
    <citation type="journal article" date="2004" name="Genome Res.">
        <title>The status, quality, and expansion of the NIH full-length cDNA project: the Mammalian Gene Collection (MGC).</title>
        <authorList>
            <consortium name="The MGC Project Team"/>
        </authorList>
    </citation>
    <scope>NUCLEOTIDE SEQUENCE [LARGE SCALE MRNA] (ISOFORM 1)</scope>
    <source>
        <tissue>Lung</tissue>
        <tissue>Placenta</tissue>
        <tissue>Skeletal muscle</tissue>
    </source>
</reference>
<reference key="10">
    <citation type="journal article" date="2003" name="J. Biol. Chem.">
        <title>The subunit composition of the human NADH dehydrogenase obtained by rapid one-step immunopurification.</title>
        <authorList>
            <person name="Murray J."/>
            <person name="Zhang B."/>
            <person name="Taylor S.W."/>
            <person name="Oglesbee D."/>
            <person name="Fahy E."/>
            <person name="Marusich M.F."/>
            <person name="Ghosh S.S."/>
            <person name="Capaldi R.A."/>
        </authorList>
    </citation>
    <scope>IDENTIFICATION IN THE NADH-UBIQUINONE OXIDOREDUCTASE COMPLEX</scope>
    <scope>IDENTIFICATION BY MASS SPECTROMETRY</scope>
    <scope>SUBCELLULAR LOCATION</scope>
</reference>
<reference key="11">
    <citation type="journal article" date="2009" name="Science">
        <title>Lysine acetylation targets protein complexes and co-regulates major cellular functions.</title>
        <authorList>
            <person name="Choudhary C."/>
            <person name="Kumar C."/>
            <person name="Gnad F."/>
            <person name="Nielsen M.L."/>
            <person name="Rehman M."/>
            <person name="Walther T.C."/>
            <person name="Olsen J.V."/>
            <person name="Mann M."/>
        </authorList>
    </citation>
    <scope>ACETYLATION [LARGE SCALE ANALYSIS] AT LYS-30 AND LYS-60</scope>
    <scope>IDENTIFICATION BY MASS SPECTROMETRY [LARGE SCALE ANALYSIS]</scope>
</reference>
<reference key="12">
    <citation type="journal article" date="2011" name="BMC Syst. Biol.">
        <title>Initial characterization of the human central proteome.</title>
        <authorList>
            <person name="Burkard T.R."/>
            <person name="Planyavsky M."/>
            <person name="Kaupe I."/>
            <person name="Breitwieser F.P."/>
            <person name="Buerckstuemmer T."/>
            <person name="Bennett K.L."/>
            <person name="Superti-Furga G."/>
            <person name="Colinge J."/>
        </authorList>
    </citation>
    <scope>IDENTIFICATION BY MASS SPECTROMETRY [LARGE SCALE ANALYSIS]</scope>
</reference>
<reference key="13">
    <citation type="journal article" date="2014" name="J. Proteomics">
        <title>An enzyme assisted RP-RPLC approach for in-depth analysis of human liver phosphoproteome.</title>
        <authorList>
            <person name="Bian Y."/>
            <person name="Song C."/>
            <person name="Cheng K."/>
            <person name="Dong M."/>
            <person name="Wang F."/>
            <person name="Huang J."/>
            <person name="Sun D."/>
            <person name="Wang L."/>
            <person name="Ye M."/>
            <person name="Zou H."/>
        </authorList>
    </citation>
    <scope>IDENTIFICATION BY MASS SPECTROMETRY [LARGE SCALE ANALYSIS]</scope>
    <source>
        <tissue>Liver</tissue>
    </source>
</reference>
<reference key="14">
    <citation type="journal article" date="2015" name="Proteomics">
        <title>N-terminome analysis of the human mitochondrial proteome.</title>
        <authorList>
            <person name="Vaca Jacome A.S."/>
            <person name="Rabilloud T."/>
            <person name="Schaeffer-Reiss C."/>
            <person name="Rompais M."/>
            <person name="Ayoub D."/>
            <person name="Lane L."/>
            <person name="Bairoch A."/>
            <person name="Van Dorsselaer A."/>
            <person name="Carapito C."/>
        </authorList>
    </citation>
    <scope>IDENTIFICATION BY MASS SPECTROMETRY [LARGE SCALE ANALYSIS]</scope>
</reference>
<reference key="15">
    <citation type="journal article" date="2016" name="Nature">
        <title>Accessory subunits are integral for assembly and function of human mitochondrial complex I.</title>
        <authorList>
            <person name="Stroud D.A."/>
            <person name="Surgenor E.E."/>
            <person name="Formosa L.E."/>
            <person name="Reljic B."/>
            <person name="Frazier A.E."/>
            <person name="Dibley M.G."/>
            <person name="Osellame L.D."/>
            <person name="Stait T."/>
            <person name="Beilharz T.H."/>
            <person name="Thorburn D.R."/>
            <person name="Salim A."/>
            <person name="Ryan M.T."/>
        </authorList>
    </citation>
    <scope>FUNCTION</scope>
    <scope>IDENTIFICATION IN THE NADH-UBIQUINONE OXIDOREDUCTASE COMPLEX</scope>
</reference>